<keyword id="KW-0150">Chloroplast</keyword>
<keyword id="KW-0934">Plastid</keyword>
<keyword id="KW-0687">Ribonucleoprotein</keyword>
<keyword id="KW-0689">Ribosomal protein</keyword>
<keyword id="KW-0694">RNA-binding</keyword>
<keyword id="KW-0699">rRNA-binding</keyword>
<sequence length="181" mass="20505">MSQPLKEKYKSEIVPNLIKTFGYKNIHQVPKITKIQINRGLGAAASNNSTLQQTIEEIRIITGQQPIVTMAKKSIAGFKLRENQPLGVTVTLRNTLMFSFLERLINLVLPRVRDFNGLNPNGFDQHGNYNFGLDNQLVFPEISYESVDQQRGFNITIVTTAKTQVEGFNLLQSYGFPFKKN</sequence>
<name>RK5_HETA2</name>
<dbReference type="EMBL" id="EU168190">
    <property type="protein sequence ID" value="ABV66041.1"/>
    <property type="molecule type" value="Genomic_DNA"/>
</dbReference>
<dbReference type="RefSeq" id="YP_001936435.1">
    <property type="nucleotide sequence ID" value="NC_010772.1"/>
</dbReference>
<dbReference type="SMR" id="B2XTE3"/>
<dbReference type="GeneID" id="6335701"/>
<dbReference type="GO" id="GO:0009507">
    <property type="term" value="C:chloroplast"/>
    <property type="evidence" value="ECO:0007669"/>
    <property type="project" value="UniProtKB-SubCell"/>
</dbReference>
<dbReference type="GO" id="GO:1990904">
    <property type="term" value="C:ribonucleoprotein complex"/>
    <property type="evidence" value="ECO:0007669"/>
    <property type="project" value="UniProtKB-KW"/>
</dbReference>
<dbReference type="GO" id="GO:0005840">
    <property type="term" value="C:ribosome"/>
    <property type="evidence" value="ECO:0007669"/>
    <property type="project" value="UniProtKB-KW"/>
</dbReference>
<dbReference type="GO" id="GO:0019843">
    <property type="term" value="F:rRNA binding"/>
    <property type="evidence" value="ECO:0007669"/>
    <property type="project" value="UniProtKB-UniRule"/>
</dbReference>
<dbReference type="GO" id="GO:0003735">
    <property type="term" value="F:structural constituent of ribosome"/>
    <property type="evidence" value="ECO:0007669"/>
    <property type="project" value="InterPro"/>
</dbReference>
<dbReference type="GO" id="GO:0006412">
    <property type="term" value="P:translation"/>
    <property type="evidence" value="ECO:0007669"/>
    <property type="project" value="UniProtKB-UniRule"/>
</dbReference>
<dbReference type="FunFam" id="3.30.1440.10:FF:000001">
    <property type="entry name" value="50S ribosomal protein L5"/>
    <property type="match status" value="1"/>
</dbReference>
<dbReference type="Gene3D" id="3.30.1440.10">
    <property type="match status" value="1"/>
</dbReference>
<dbReference type="HAMAP" id="MF_01333_B">
    <property type="entry name" value="Ribosomal_uL5_B"/>
    <property type="match status" value="1"/>
</dbReference>
<dbReference type="InterPro" id="IPR002132">
    <property type="entry name" value="Ribosomal_uL5"/>
</dbReference>
<dbReference type="InterPro" id="IPR020930">
    <property type="entry name" value="Ribosomal_uL5_bac-type"/>
</dbReference>
<dbReference type="InterPro" id="IPR031309">
    <property type="entry name" value="Ribosomal_uL5_C"/>
</dbReference>
<dbReference type="InterPro" id="IPR020929">
    <property type="entry name" value="Ribosomal_uL5_CS"/>
</dbReference>
<dbReference type="InterPro" id="IPR022803">
    <property type="entry name" value="Ribosomal_uL5_dom_sf"/>
</dbReference>
<dbReference type="InterPro" id="IPR031310">
    <property type="entry name" value="Ribosomal_uL5_N"/>
</dbReference>
<dbReference type="NCBIfam" id="NF000585">
    <property type="entry name" value="PRK00010.1"/>
    <property type="match status" value="1"/>
</dbReference>
<dbReference type="PANTHER" id="PTHR11994">
    <property type="entry name" value="60S RIBOSOMAL PROTEIN L11-RELATED"/>
    <property type="match status" value="1"/>
</dbReference>
<dbReference type="Pfam" id="PF00281">
    <property type="entry name" value="Ribosomal_L5"/>
    <property type="match status" value="1"/>
</dbReference>
<dbReference type="Pfam" id="PF00673">
    <property type="entry name" value="Ribosomal_L5_C"/>
    <property type="match status" value="1"/>
</dbReference>
<dbReference type="PIRSF" id="PIRSF002161">
    <property type="entry name" value="Ribosomal_L5"/>
    <property type="match status" value="1"/>
</dbReference>
<dbReference type="SUPFAM" id="SSF55282">
    <property type="entry name" value="RL5-like"/>
    <property type="match status" value="1"/>
</dbReference>
<dbReference type="PROSITE" id="PS00358">
    <property type="entry name" value="RIBOSOMAL_L5"/>
    <property type="match status" value="1"/>
</dbReference>
<protein>
    <recommendedName>
        <fullName evidence="2">Large ribosomal subunit protein uL5c</fullName>
    </recommendedName>
    <alternativeName>
        <fullName>50S ribosomal protein L5, chloroplastic</fullName>
    </alternativeName>
</protein>
<accession>B2XTE3</accession>
<proteinExistence type="inferred from homology"/>
<reference key="1">
    <citation type="journal article" date="2008" name="BMC Genomics">
        <title>Chloroplast genome sequencing analysis of Heterosigma akashiwo CCMP452 (West Atlantic) and NIES293 (West Pacific) strains.</title>
        <authorList>
            <person name="Cattolico R.A."/>
            <person name="Jacobs M.A."/>
            <person name="Zhou Y."/>
            <person name="Chang J."/>
            <person name="Duplessis M."/>
            <person name="Lybrand T."/>
            <person name="McKay J."/>
            <person name="Ong H.C."/>
            <person name="Sims E."/>
            <person name="Rocap G."/>
        </authorList>
    </citation>
    <scope>NUCLEOTIDE SEQUENCE [LARGE SCALE GENOMIC DNA]</scope>
</reference>
<gene>
    <name type="primary">rpl5</name>
    <name type="ordered locus">Heak293_Cp134</name>
</gene>
<geneLocation type="chloroplast"/>
<feature type="chain" id="PRO_0000365653" description="Large ribosomal subunit protein uL5c">
    <location>
        <begin position="1"/>
        <end position="181"/>
    </location>
</feature>
<evidence type="ECO:0000250" key="1"/>
<evidence type="ECO:0000305" key="2"/>
<comment type="function">
    <text evidence="1">Binds 5S rRNA, forms part of the central protuberance of the 50S subunit.</text>
</comment>
<comment type="subunit">
    <text evidence="1">Part of the 50S ribosomal subunit; contacts the 5S rRNA.</text>
</comment>
<comment type="subcellular location">
    <subcellularLocation>
        <location>Plastid</location>
        <location>Chloroplast</location>
    </subcellularLocation>
</comment>
<comment type="similarity">
    <text evidence="2">Belongs to the universal ribosomal protein uL5 family.</text>
</comment>
<organism>
    <name type="scientific">Heterosigma akashiwo (strain NIES-293 / 8280G21-1)</name>
    <dbReference type="NCBI Taxonomy" id="536047"/>
    <lineage>
        <taxon>Eukaryota</taxon>
        <taxon>Sar</taxon>
        <taxon>Stramenopiles</taxon>
        <taxon>Ochrophyta</taxon>
        <taxon>Raphidophyceae</taxon>
        <taxon>Chattonellales</taxon>
        <taxon>Chattonellaceae</taxon>
        <taxon>Heterosigma</taxon>
    </lineage>
</organism>